<organism>
    <name type="scientific">Aspergillus fumigatus (strain CBS 144.89 / FGSC A1163 / CEA10)</name>
    <name type="common">Neosartorya fumigata</name>
    <dbReference type="NCBI Taxonomy" id="451804"/>
    <lineage>
        <taxon>Eukaryota</taxon>
        <taxon>Fungi</taxon>
        <taxon>Dikarya</taxon>
        <taxon>Ascomycota</taxon>
        <taxon>Pezizomycotina</taxon>
        <taxon>Eurotiomycetes</taxon>
        <taxon>Eurotiomycetidae</taxon>
        <taxon>Eurotiales</taxon>
        <taxon>Aspergillaceae</taxon>
        <taxon>Aspergillus</taxon>
        <taxon>Aspergillus subgen. Fumigati</taxon>
    </lineage>
</organism>
<sequence length="1617" mass="175919">MDGQRQQTYIPAPPPPSATQPSQSHMLSLPPPPPRHLPTQPQGVMPPPPPGPPPGPPPGPGYGASKLANSQLQQQNNLGWQHNWARQALSQGFLPPPPPPPMVPTNQAYGRQTSFSVPNADGPITSATYVPGSNTFGAGVGIPGFDAHTRPSYEAYGTMSGSDRIRGPVHHLYESSGGDGSAYKRDGTVPPTPSARTMPSSLALHDNAQESVASSLPGATAQNHQSQTGQTNEPTKSPSHRQNNSNTLLGGMSPSEAAVQWPLDRVLLWLAKNGFSRDWQETFKTLQIEGADFLDIGHGANGRGNFNKMHNEVFPQLAKECEASGTGWDKERELGEGKRMRRLIRQIHDDDSFDVGIPAQKRRESQAPSEGAPDTSPKLSHEPQSAGPHSGTIENSPNLRAPQLAQPHRHSVQMRSVTLPIPTTHDIASSDFSQKDGISSRSDFSRSVLVGLGVDHRRQSPSMSSDNGNLVAPFRSYEDSPKSGSPATQHATLNQGLSSSSTGDLSVKYEHSRGNSSDSTMGRRYYESRKGQETIRPSPQEMCSRQWTGETSSSYPKEHKGIFNFLKKRSKGGDSTHPSPEEPNLESPTSPVNLRQNGPHLPYTKPSFNASDMSLGERPSSASMSDHERLRGKPAQKGKKWSFVTLDGWNYRLVDITDMDSVETLRAAICHNLGIADWASAQIFLTEPGQSDHEEPLNDTMLALCRRTKSDSIGSLKLFVRGTHLQPVPNHVPNFAGLGVPLPDKHTASPTHHLPRKPLDDEALSRIPPQPQTGPASPQLGIRPQQPKTPAAKFPARDAPQHTEGMSPVEGDQQVGISPEPDKADLLARHEEHKREVERKQKAYLSSKGPPQPRNDSYGETGYRRAGVIDFDERRVSPYEDKKADTLVPLRKPPSAPQESYTLTRINSLRKKDGDRPRAQPAVQTHGLGAVLASMGRMTSAIGTPAPSVPTPTSAGGKQTNFGSFGSPTQGNTKSAPQSSPEKESLDNPGNPAEHRHTKSTAPEIPKPTLQSRKSYGPEFDFEETEVSFQRSPRPQDDSDEDSDDGLFAIPLSNNKASTKENDSGSGTSEAQKRTEKPALTVNTESRLRKGLSVSFRSPSATRESFADANGDSGGREGASFLMAASPEDERPPPRRDSFARGDIWASRPPVEGVIDNLDDFFPDIDLDAPYLDGQGVSPPSSPANRAPPENDLHKKENQPSSSYTGEMNANAGDTLGSNEPTLKPQGGDVVARRNINRSGGGLTRGKSIREVAKGANQASRSRSIHTGNQKSGEILRRKSTKMFGAKIMQIKPKPGSRLSQLDPIPQNNTPSGVPQRQPTFRIIRGQLIGKGTYGRVYLGINADNGEVLAVKQVEINPRLAGQDTDRVKEMVAAMDQEIDTMQHLEHPNIVQYLGCERGEFSISIYLEYISGGSIGSCLRKHGKFEESVVKSLTRQTLSGLAYLHDQGILHRDLKADNILLDLDGTCKISDFGISKKTDDIYGNDSSNSMQGSVFWMAPEVIQSQGQGYSAKVDIWSLGCVVLEMFAGRRPWSKEEAIGAIFKLGSLSQAPPIPDDVSMTISPAALAFMYDCFTVPYRDSSERPTAQTLLTRHPFCEEDPNYNFLDTELYAKIRHVL</sequence>
<proteinExistence type="inferred from homology"/>
<dbReference type="EC" id="2.7.11.24" evidence="7"/>
<dbReference type="EMBL" id="DS499596">
    <property type="protein sequence ID" value="EDP52640.1"/>
    <property type="molecule type" value="Genomic_DNA"/>
</dbReference>
<dbReference type="SMR" id="B0XXN8"/>
<dbReference type="EnsemblFungi" id="EDP52640">
    <property type="protein sequence ID" value="EDP52640"/>
    <property type="gene ID" value="AFUB_038060"/>
</dbReference>
<dbReference type="VEuPathDB" id="FungiDB:AFUB_038060"/>
<dbReference type="HOGENOM" id="CLU_000961_3_0_1"/>
<dbReference type="OrthoDB" id="78728at5052"/>
<dbReference type="PhylomeDB" id="B0XXN8"/>
<dbReference type="Proteomes" id="UP000001699">
    <property type="component" value="Unassembled WGS sequence"/>
</dbReference>
<dbReference type="GO" id="GO:0005524">
    <property type="term" value="F:ATP binding"/>
    <property type="evidence" value="ECO:0007669"/>
    <property type="project" value="UniProtKB-KW"/>
</dbReference>
<dbReference type="GO" id="GO:0004672">
    <property type="term" value="F:protein kinase activity"/>
    <property type="evidence" value="ECO:0007669"/>
    <property type="project" value="InterPro"/>
</dbReference>
<dbReference type="GO" id="GO:0000165">
    <property type="term" value="P:MAPK cascade"/>
    <property type="evidence" value="ECO:0007669"/>
    <property type="project" value="UniProtKB-ARBA"/>
</dbReference>
<dbReference type="FunFam" id="1.10.510.10:FF:000182">
    <property type="entry name" value="MAP kinase kinase kinase mkh1"/>
    <property type="match status" value="1"/>
</dbReference>
<dbReference type="Gene3D" id="1.10.510.10">
    <property type="entry name" value="Transferase(Phosphotransferase) domain 1"/>
    <property type="match status" value="1"/>
</dbReference>
<dbReference type="InterPro" id="IPR011009">
    <property type="entry name" value="Kinase-like_dom_sf"/>
</dbReference>
<dbReference type="InterPro" id="IPR050538">
    <property type="entry name" value="MAP_kinase_kinase_kinase"/>
</dbReference>
<dbReference type="InterPro" id="IPR000719">
    <property type="entry name" value="Prot_kinase_dom"/>
</dbReference>
<dbReference type="InterPro" id="IPR017441">
    <property type="entry name" value="Protein_kinase_ATP_BS"/>
</dbReference>
<dbReference type="InterPro" id="IPR008271">
    <property type="entry name" value="Ser/Thr_kinase_AS"/>
</dbReference>
<dbReference type="PANTHER" id="PTHR48016">
    <property type="entry name" value="MAP KINASE KINASE KINASE SSK2-RELATED-RELATED"/>
    <property type="match status" value="1"/>
</dbReference>
<dbReference type="PANTHER" id="PTHR48016:SF48">
    <property type="entry name" value="SERINE_THREONINE-PROTEIN KINASE BCK1_SLK1_SSP31"/>
    <property type="match status" value="1"/>
</dbReference>
<dbReference type="Pfam" id="PF00069">
    <property type="entry name" value="Pkinase"/>
    <property type="match status" value="1"/>
</dbReference>
<dbReference type="SMART" id="SM00220">
    <property type="entry name" value="S_TKc"/>
    <property type="match status" value="1"/>
</dbReference>
<dbReference type="SUPFAM" id="SSF56112">
    <property type="entry name" value="Protein kinase-like (PK-like)"/>
    <property type="match status" value="1"/>
</dbReference>
<dbReference type="PROSITE" id="PS00107">
    <property type="entry name" value="PROTEIN_KINASE_ATP"/>
    <property type="match status" value="1"/>
</dbReference>
<dbReference type="PROSITE" id="PS50011">
    <property type="entry name" value="PROTEIN_KINASE_DOM"/>
    <property type="match status" value="1"/>
</dbReference>
<dbReference type="PROSITE" id="PS00108">
    <property type="entry name" value="PROTEIN_KINASE_ST"/>
    <property type="match status" value="1"/>
</dbReference>
<name>BCK1_ASPFC</name>
<feature type="chain" id="PRO_0000454886" description="Mitogen-activated protein kinase kinae kinase bck1">
    <location>
        <begin position="1"/>
        <end position="1617"/>
    </location>
</feature>
<feature type="domain" description="Protein kinase" evidence="1">
    <location>
        <begin position="1323"/>
        <end position="1596"/>
    </location>
</feature>
<feature type="region of interest" description="Disordered" evidence="3">
    <location>
        <begin position="1"/>
        <end position="73"/>
    </location>
</feature>
<feature type="region of interest" description="Disordered" evidence="3">
    <location>
        <begin position="167"/>
        <end position="199"/>
    </location>
</feature>
<feature type="region of interest" description="Disordered" evidence="3">
    <location>
        <begin position="211"/>
        <end position="253"/>
    </location>
</feature>
<feature type="region of interest" description="Disordered" evidence="3">
    <location>
        <begin position="345"/>
        <end position="399"/>
    </location>
</feature>
<feature type="region of interest" description="Disordered" evidence="3">
    <location>
        <begin position="455"/>
        <end position="555"/>
    </location>
</feature>
<feature type="region of interest" description="Disordered" evidence="3">
    <location>
        <begin position="568"/>
        <end position="633"/>
    </location>
</feature>
<feature type="region of interest" description="Disordered" evidence="3">
    <location>
        <begin position="739"/>
        <end position="820"/>
    </location>
</feature>
<feature type="region of interest" description="Disordered" evidence="3">
    <location>
        <begin position="832"/>
        <end position="1144"/>
    </location>
</feature>
<feature type="region of interest" description="Disordered" evidence="3">
    <location>
        <begin position="1164"/>
        <end position="1277"/>
    </location>
</feature>
<feature type="compositionally biased region" description="Low complexity" evidence="3">
    <location>
        <begin position="19"/>
        <end position="28"/>
    </location>
</feature>
<feature type="compositionally biased region" description="Pro residues" evidence="3">
    <location>
        <begin position="44"/>
        <end position="60"/>
    </location>
</feature>
<feature type="compositionally biased region" description="Polar residues" evidence="3">
    <location>
        <begin position="220"/>
        <end position="248"/>
    </location>
</feature>
<feature type="compositionally biased region" description="Polar residues" evidence="3">
    <location>
        <begin position="482"/>
        <end position="504"/>
    </location>
</feature>
<feature type="compositionally biased region" description="Basic and acidic residues" evidence="3">
    <location>
        <begin position="524"/>
        <end position="533"/>
    </location>
</feature>
<feature type="compositionally biased region" description="Polar residues" evidence="3">
    <location>
        <begin position="535"/>
        <end position="555"/>
    </location>
</feature>
<feature type="compositionally biased region" description="Polar residues" evidence="3">
    <location>
        <begin position="586"/>
        <end position="596"/>
    </location>
</feature>
<feature type="compositionally biased region" description="Basic and acidic residues" evidence="3">
    <location>
        <begin position="832"/>
        <end position="841"/>
    </location>
</feature>
<feature type="compositionally biased region" description="Basic and acidic residues" evidence="3">
    <location>
        <begin position="871"/>
        <end position="885"/>
    </location>
</feature>
<feature type="compositionally biased region" description="Polar residues" evidence="3">
    <location>
        <begin position="897"/>
        <end position="907"/>
    </location>
</feature>
<feature type="compositionally biased region" description="Polar residues" evidence="3">
    <location>
        <begin position="956"/>
        <end position="980"/>
    </location>
</feature>
<feature type="compositionally biased region" description="Basic and acidic residues" evidence="3">
    <location>
        <begin position="1128"/>
        <end position="1140"/>
    </location>
</feature>
<feature type="compositionally biased region" description="Basic and acidic residues" evidence="3">
    <location>
        <begin position="1189"/>
        <end position="1198"/>
    </location>
</feature>
<feature type="compositionally biased region" description="Polar residues" evidence="3">
    <location>
        <begin position="1199"/>
        <end position="1208"/>
    </location>
</feature>
<feature type="compositionally biased region" description="Polar residues" evidence="3">
    <location>
        <begin position="1257"/>
        <end position="1272"/>
    </location>
</feature>
<feature type="active site" description="Proton acceptor" evidence="2">
    <location>
        <position position="1453"/>
    </location>
</feature>
<feature type="binding site" evidence="1">
    <location>
        <begin position="1329"/>
        <end position="1337"/>
    </location>
    <ligand>
        <name>ATP</name>
        <dbReference type="ChEBI" id="CHEBI:30616"/>
    </ligand>
</feature>
<feature type="binding site" evidence="1">
    <location>
        <position position="1352"/>
    </location>
    <ligand>
        <name>ATP</name>
        <dbReference type="ChEBI" id="CHEBI:30616"/>
    </ligand>
</feature>
<comment type="function">
    <text evidence="4">Mitogen-activated kinase kinase kinase (MAPKKK), part of the cell wall integrity (CWI) signaling pathway composed by three protein kinases bck1, mkk2 and mpkA and responsible for the maintaining of cell-wall integrity balance (PubMed:19715768). The CWI pathway also regulates the oxidative stress response, as well as the production of some secondary metabolites including pyomelanin (PubMed:19715768).</text>
</comment>
<comment type="catalytic activity">
    <reaction evidence="7">
        <text>L-seryl-[protein] + ATP = O-phospho-L-seryl-[protein] + ADP + H(+)</text>
        <dbReference type="Rhea" id="RHEA:17989"/>
        <dbReference type="Rhea" id="RHEA-COMP:9863"/>
        <dbReference type="Rhea" id="RHEA-COMP:11604"/>
        <dbReference type="ChEBI" id="CHEBI:15378"/>
        <dbReference type="ChEBI" id="CHEBI:29999"/>
        <dbReference type="ChEBI" id="CHEBI:30616"/>
        <dbReference type="ChEBI" id="CHEBI:83421"/>
        <dbReference type="ChEBI" id="CHEBI:456216"/>
        <dbReference type="EC" id="2.7.11.24"/>
    </reaction>
    <physiologicalReaction direction="left-to-right" evidence="7">
        <dbReference type="Rhea" id="RHEA:17990"/>
    </physiologicalReaction>
</comment>
<comment type="catalytic activity">
    <reaction evidence="7">
        <text>L-threonyl-[protein] + ATP = O-phospho-L-threonyl-[protein] + ADP + H(+)</text>
        <dbReference type="Rhea" id="RHEA:46608"/>
        <dbReference type="Rhea" id="RHEA-COMP:11060"/>
        <dbReference type="Rhea" id="RHEA-COMP:11605"/>
        <dbReference type="ChEBI" id="CHEBI:15378"/>
        <dbReference type="ChEBI" id="CHEBI:30013"/>
        <dbReference type="ChEBI" id="CHEBI:30616"/>
        <dbReference type="ChEBI" id="CHEBI:61977"/>
        <dbReference type="ChEBI" id="CHEBI:456216"/>
        <dbReference type="EC" id="2.7.11.24"/>
    </reaction>
    <physiologicalReaction direction="left-to-right" evidence="7">
        <dbReference type="Rhea" id="RHEA:46609"/>
    </physiologicalReaction>
</comment>
<comment type="disruption phenotype">
    <text evidence="4">Leads to the formation of thicker hyphae, which appear less elongated and form more branched hyphae (PubMed:19715768). Results in increased sensitivity to cell wall integrity inhibitors such as glucanex, SDS, congo red and calcofluor white (PubMed:19715768). Impairs phosphorylation of the MAPK mpkA (PubMed:19715768).</text>
</comment>
<comment type="similarity">
    <text evidence="6">Belongs to the protein kinase superfamily. STE Ser/Thr protein kinase family. MAP kinase kinase subfamily.</text>
</comment>
<evidence type="ECO:0000255" key="1">
    <source>
        <dbReference type="PROSITE-ProRule" id="PRU00159"/>
    </source>
</evidence>
<evidence type="ECO:0000255" key="2">
    <source>
        <dbReference type="PROSITE-ProRule" id="PRU10027"/>
    </source>
</evidence>
<evidence type="ECO:0000256" key="3">
    <source>
        <dbReference type="SAM" id="MobiDB-lite"/>
    </source>
</evidence>
<evidence type="ECO:0000269" key="4">
    <source>
    </source>
</evidence>
<evidence type="ECO:0000303" key="5">
    <source>
    </source>
</evidence>
<evidence type="ECO:0000305" key="6"/>
<evidence type="ECO:0000305" key="7">
    <source>
    </source>
</evidence>
<keyword id="KW-0067">ATP-binding</keyword>
<keyword id="KW-0418">Kinase</keyword>
<keyword id="KW-0547">Nucleotide-binding</keyword>
<keyword id="KW-0808">Transferase</keyword>
<gene>
    <name evidence="5" type="primary">bck1</name>
    <name type="ORF">AFUB_038060</name>
</gene>
<protein>
    <recommendedName>
        <fullName evidence="5">Mitogen-activated protein kinase kinae kinase bck1</fullName>
        <shortName evidence="5">MAPKKK bck1</shortName>
        <ecNumber evidence="7">2.7.11.24</ecNumber>
    </recommendedName>
</protein>
<reference key="1">
    <citation type="journal article" date="2008" name="PLoS Genet.">
        <title>Genomic islands in the pathogenic filamentous fungus Aspergillus fumigatus.</title>
        <authorList>
            <person name="Fedorova N.D."/>
            <person name="Khaldi N."/>
            <person name="Joardar V.S."/>
            <person name="Maiti R."/>
            <person name="Amedeo P."/>
            <person name="Anderson M.J."/>
            <person name="Crabtree J."/>
            <person name="Silva J.C."/>
            <person name="Badger J.H."/>
            <person name="Albarraq A."/>
            <person name="Angiuoli S."/>
            <person name="Bussey H."/>
            <person name="Bowyer P."/>
            <person name="Cotty P.J."/>
            <person name="Dyer P.S."/>
            <person name="Egan A."/>
            <person name="Galens K."/>
            <person name="Fraser-Liggett C.M."/>
            <person name="Haas B.J."/>
            <person name="Inman J.M."/>
            <person name="Kent R."/>
            <person name="Lemieux S."/>
            <person name="Malavazi I."/>
            <person name="Orvis J."/>
            <person name="Roemer T."/>
            <person name="Ronning C.M."/>
            <person name="Sundaram J.P."/>
            <person name="Sutton G."/>
            <person name="Turner G."/>
            <person name="Venter J.C."/>
            <person name="White O.R."/>
            <person name="Whitty B.R."/>
            <person name="Youngman P."/>
            <person name="Wolfe K.H."/>
            <person name="Goldman G.H."/>
            <person name="Wortman J.R."/>
            <person name="Jiang B."/>
            <person name="Denning D.W."/>
            <person name="Nierman W.C."/>
        </authorList>
    </citation>
    <scope>NUCLEOTIDE SEQUENCE [LARGE SCALE GENOMIC DNA]</scope>
    <source>
        <strain>CBS 144.89 / FGSC A1163 / CEA10</strain>
    </source>
</reference>
<reference key="2">
    <citation type="journal article" date="2009" name="Fungal Genet. Biol.">
        <title>The MpkA MAP kinase module regulates cell wall integrity signaling and pyomelanin formation in Aspergillus fumigatus.</title>
        <authorList>
            <person name="Valiante V."/>
            <person name="Jain R."/>
            <person name="Heinekamp T."/>
            <person name="Brakhage A.A."/>
        </authorList>
    </citation>
    <scope>FUNCTION</scope>
    <scope>DISRUPTION PHENOTYPE</scope>
</reference>
<accession>B0XXN8</accession>